<evidence type="ECO:0000255" key="1">
    <source>
        <dbReference type="HAMAP-Rule" id="MF_01646"/>
    </source>
</evidence>
<accession>Q57IZ5</accession>
<organism>
    <name type="scientific">Salmonella choleraesuis (strain SC-B67)</name>
    <dbReference type="NCBI Taxonomy" id="321314"/>
    <lineage>
        <taxon>Bacteria</taxon>
        <taxon>Pseudomonadati</taxon>
        <taxon>Pseudomonadota</taxon>
        <taxon>Gammaproteobacteria</taxon>
        <taxon>Enterobacterales</taxon>
        <taxon>Enterobacteriaceae</taxon>
        <taxon>Salmonella</taxon>
    </lineage>
</organism>
<comment type="function">
    <text evidence="1">Multifunctional enzyme that catalyzes the SAM-dependent methylations of uroporphyrinogen III at position C-2 and C-7 to form precorrin-2 via precorrin-1. Then it catalyzes the NAD-dependent ring dehydrogenation of precorrin-2 to yield sirohydrochlorin. Finally, it catalyzes the ferrochelation of sirohydrochlorin to yield siroheme.</text>
</comment>
<comment type="catalytic activity">
    <reaction evidence="1">
        <text>uroporphyrinogen III + 2 S-adenosyl-L-methionine = precorrin-2 + 2 S-adenosyl-L-homocysteine + H(+)</text>
        <dbReference type="Rhea" id="RHEA:32459"/>
        <dbReference type="ChEBI" id="CHEBI:15378"/>
        <dbReference type="ChEBI" id="CHEBI:57308"/>
        <dbReference type="ChEBI" id="CHEBI:57856"/>
        <dbReference type="ChEBI" id="CHEBI:58827"/>
        <dbReference type="ChEBI" id="CHEBI:59789"/>
        <dbReference type="EC" id="2.1.1.107"/>
    </reaction>
</comment>
<comment type="catalytic activity">
    <reaction evidence="1">
        <text>precorrin-2 + NAD(+) = sirohydrochlorin + NADH + 2 H(+)</text>
        <dbReference type="Rhea" id="RHEA:15613"/>
        <dbReference type="ChEBI" id="CHEBI:15378"/>
        <dbReference type="ChEBI" id="CHEBI:57540"/>
        <dbReference type="ChEBI" id="CHEBI:57945"/>
        <dbReference type="ChEBI" id="CHEBI:58351"/>
        <dbReference type="ChEBI" id="CHEBI:58827"/>
        <dbReference type="EC" id="1.3.1.76"/>
    </reaction>
</comment>
<comment type="catalytic activity">
    <reaction evidence="1">
        <text>siroheme + 2 H(+) = sirohydrochlorin + Fe(2+)</text>
        <dbReference type="Rhea" id="RHEA:24360"/>
        <dbReference type="ChEBI" id="CHEBI:15378"/>
        <dbReference type="ChEBI" id="CHEBI:29033"/>
        <dbReference type="ChEBI" id="CHEBI:58351"/>
        <dbReference type="ChEBI" id="CHEBI:60052"/>
        <dbReference type="EC" id="4.99.1.4"/>
    </reaction>
</comment>
<comment type="pathway">
    <text evidence="1">Cofactor biosynthesis; adenosylcobalamin biosynthesis; precorrin-2 from uroporphyrinogen III: step 1/1.</text>
</comment>
<comment type="pathway">
    <text evidence="1">Cofactor biosynthesis; adenosylcobalamin biosynthesis; sirohydrochlorin from precorrin-2: step 1/1.</text>
</comment>
<comment type="pathway">
    <text evidence="1">Porphyrin-containing compound metabolism; siroheme biosynthesis; precorrin-2 from uroporphyrinogen III: step 1/1.</text>
</comment>
<comment type="pathway">
    <text evidence="1">Porphyrin-containing compound metabolism; siroheme biosynthesis; siroheme from sirohydrochlorin: step 1/1.</text>
</comment>
<comment type="pathway">
    <text evidence="1">Porphyrin-containing compound metabolism; siroheme biosynthesis; sirohydrochlorin from precorrin-2: step 1/1.</text>
</comment>
<comment type="similarity">
    <text evidence="1">In the N-terminal section; belongs to the precorrin-2 dehydrogenase / sirohydrochlorin ferrochelatase family.</text>
</comment>
<comment type="similarity">
    <text evidence="1">In the C-terminal section; belongs to the precorrin methyltransferase family.</text>
</comment>
<reference key="1">
    <citation type="journal article" date="2005" name="Nucleic Acids Res.">
        <title>The genome sequence of Salmonella enterica serovar Choleraesuis, a highly invasive and resistant zoonotic pathogen.</title>
        <authorList>
            <person name="Chiu C.-H."/>
            <person name="Tang P."/>
            <person name="Chu C."/>
            <person name="Hu S."/>
            <person name="Bao Q."/>
            <person name="Yu J."/>
            <person name="Chou Y.-Y."/>
            <person name="Wang H.-S."/>
            <person name="Lee Y.-S."/>
        </authorList>
    </citation>
    <scope>NUCLEOTIDE SEQUENCE [LARGE SCALE GENOMIC DNA]</scope>
    <source>
        <strain>SC-B67</strain>
    </source>
</reference>
<keyword id="KW-0169">Cobalamin biosynthesis</keyword>
<keyword id="KW-0456">Lyase</keyword>
<keyword id="KW-0489">Methyltransferase</keyword>
<keyword id="KW-0511">Multifunctional enzyme</keyword>
<keyword id="KW-0520">NAD</keyword>
<keyword id="KW-0560">Oxidoreductase</keyword>
<keyword id="KW-0597">Phosphoprotein</keyword>
<keyword id="KW-0627">Porphyrin biosynthesis</keyword>
<keyword id="KW-0949">S-adenosyl-L-methionine</keyword>
<keyword id="KW-0808">Transferase</keyword>
<feature type="chain" id="PRO_0000330553" description="Siroheme synthase">
    <location>
        <begin position="1"/>
        <end position="457"/>
    </location>
</feature>
<feature type="region of interest" description="Precorrin-2 dehydrogenase /sirohydrochlorin ferrochelatase" evidence="1">
    <location>
        <begin position="1"/>
        <end position="204"/>
    </location>
</feature>
<feature type="region of interest" description="Uroporphyrinogen-III C-methyltransferase" evidence="1">
    <location>
        <begin position="216"/>
        <end position="457"/>
    </location>
</feature>
<feature type="active site" description="Proton acceptor" evidence="1">
    <location>
        <position position="248"/>
    </location>
</feature>
<feature type="active site" description="Proton donor" evidence="1">
    <location>
        <position position="270"/>
    </location>
</feature>
<feature type="binding site" evidence="1">
    <location>
        <begin position="22"/>
        <end position="23"/>
    </location>
    <ligand>
        <name>NAD(+)</name>
        <dbReference type="ChEBI" id="CHEBI:57540"/>
    </ligand>
</feature>
<feature type="binding site" evidence="1">
    <location>
        <begin position="43"/>
        <end position="44"/>
    </location>
    <ligand>
        <name>NAD(+)</name>
        <dbReference type="ChEBI" id="CHEBI:57540"/>
    </ligand>
</feature>
<feature type="binding site" evidence="1">
    <location>
        <position position="225"/>
    </location>
    <ligand>
        <name>S-adenosyl-L-methionine</name>
        <dbReference type="ChEBI" id="CHEBI:59789"/>
    </ligand>
</feature>
<feature type="binding site" evidence="1">
    <location>
        <begin position="301"/>
        <end position="303"/>
    </location>
    <ligand>
        <name>S-adenosyl-L-methionine</name>
        <dbReference type="ChEBI" id="CHEBI:59789"/>
    </ligand>
</feature>
<feature type="binding site" evidence="1">
    <location>
        <position position="306"/>
    </location>
    <ligand>
        <name>S-adenosyl-L-methionine</name>
        <dbReference type="ChEBI" id="CHEBI:59789"/>
    </ligand>
</feature>
<feature type="binding site" evidence="1">
    <location>
        <begin position="331"/>
        <end position="332"/>
    </location>
    <ligand>
        <name>S-adenosyl-L-methionine</name>
        <dbReference type="ChEBI" id="CHEBI:59789"/>
    </ligand>
</feature>
<feature type="binding site" evidence="1">
    <location>
        <position position="382"/>
    </location>
    <ligand>
        <name>S-adenosyl-L-methionine</name>
        <dbReference type="ChEBI" id="CHEBI:59789"/>
    </ligand>
</feature>
<feature type="binding site" evidence="1">
    <location>
        <position position="411"/>
    </location>
    <ligand>
        <name>S-adenosyl-L-methionine</name>
        <dbReference type="ChEBI" id="CHEBI:59789"/>
    </ligand>
</feature>
<feature type="modified residue" description="Phosphoserine" evidence="1">
    <location>
        <position position="128"/>
    </location>
</feature>
<protein>
    <recommendedName>
        <fullName evidence="1">Siroheme synthase</fullName>
    </recommendedName>
    <domain>
        <recommendedName>
            <fullName evidence="1">Uroporphyrinogen-III C-methyltransferase</fullName>
            <shortName evidence="1">Urogen III methylase</shortName>
            <ecNumber evidence="1">2.1.1.107</ecNumber>
        </recommendedName>
        <alternativeName>
            <fullName evidence="1">SUMT</fullName>
        </alternativeName>
        <alternativeName>
            <fullName evidence="1">Uroporphyrinogen III methylase</fullName>
            <shortName evidence="1">UROM</shortName>
        </alternativeName>
    </domain>
    <domain>
        <recommendedName>
            <fullName evidence="1">Precorrin-2 dehydrogenase</fullName>
            <ecNumber evidence="1">1.3.1.76</ecNumber>
        </recommendedName>
    </domain>
    <domain>
        <recommendedName>
            <fullName evidence="1">Sirohydrochlorin ferrochelatase</fullName>
            <ecNumber evidence="1">4.99.1.4</ecNumber>
        </recommendedName>
    </domain>
</protein>
<sequence>MDHLPIFCQLRDRDCLIVGGGDVAERKARLLLEAGARLTVNALTFIPQFTVWANEGMLTLVEGPFDETLLDSCWLAIAATDDDTVNQRVSDAAESRRIFCNVVDAPKAASFIMPSIIDRSPLMVAVSSGGTSPVLARLLREKLESLLPQHLGQVARYAGQLRARVKKQFATMGERRRFWEKFFVNDRLAQSLANADEKAVNATTERLFSEPLDHRGEVVLVGAGPGDAGLLTLKGLQQIQQADIVVYDRLVSDDIMNLVRRDADRVFVGKRAGYHCVPQEEINQILLREAQKGKRVVRLKGGDPFIFGRGGEELETLCHAGIPFSVVPGITAASGCSAYSGIPLTHRDYAQSVRLVTGHLKTGGELDWENLAAEKQTLVFYMGLNQAATIQEKLIAFGMQADMPVALVENGTSVKQRVVHGVLTQLGELAQQVESPALIIVGRVVGLRDKLNWFSNY</sequence>
<gene>
    <name evidence="1" type="primary">cysG</name>
    <name type="ordered locus">SCH_3411</name>
</gene>
<proteinExistence type="inferred from homology"/>
<dbReference type="EC" id="2.1.1.107" evidence="1"/>
<dbReference type="EC" id="1.3.1.76" evidence="1"/>
<dbReference type="EC" id="4.99.1.4" evidence="1"/>
<dbReference type="EMBL" id="AE017220">
    <property type="protein sequence ID" value="AAX67317.1"/>
    <property type="molecule type" value="Genomic_DNA"/>
</dbReference>
<dbReference type="RefSeq" id="WP_000349897.1">
    <property type="nucleotide sequence ID" value="NC_006905.1"/>
</dbReference>
<dbReference type="SMR" id="Q57IZ5"/>
<dbReference type="KEGG" id="sec:SCH_3411"/>
<dbReference type="HOGENOM" id="CLU_011276_2_0_6"/>
<dbReference type="UniPathway" id="UPA00148">
    <property type="reaction ID" value="UER00211"/>
</dbReference>
<dbReference type="UniPathway" id="UPA00148">
    <property type="reaction ID" value="UER00222"/>
</dbReference>
<dbReference type="UniPathway" id="UPA00262">
    <property type="reaction ID" value="UER00211"/>
</dbReference>
<dbReference type="UniPathway" id="UPA00262">
    <property type="reaction ID" value="UER00222"/>
</dbReference>
<dbReference type="UniPathway" id="UPA00262">
    <property type="reaction ID" value="UER00376"/>
</dbReference>
<dbReference type="Proteomes" id="UP000000538">
    <property type="component" value="Chromosome"/>
</dbReference>
<dbReference type="GO" id="GO:0051287">
    <property type="term" value="F:NAD binding"/>
    <property type="evidence" value="ECO:0007669"/>
    <property type="project" value="InterPro"/>
</dbReference>
<dbReference type="GO" id="GO:0043115">
    <property type="term" value="F:precorrin-2 dehydrogenase activity"/>
    <property type="evidence" value="ECO:0007669"/>
    <property type="project" value="UniProtKB-UniRule"/>
</dbReference>
<dbReference type="GO" id="GO:0051266">
    <property type="term" value="F:sirohydrochlorin ferrochelatase activity"/>
    <property type="evidence" value="ECO:0007669"/>
    <property type="project" value="UniProtKB-EC"/>
</dbReference>
<dbReference type="GO" id="GO:0004851">
    <property type="term" value="F:uroporphyrin-III C-methyltransferase activity"/>
    <property type="evidence" value="ECO:0007669"/>
    <property type="project" value="UniProtKB-UniRule"/>
</dbReference>
<dbReference type="GO" id="GO:0009236">
    <property type="term" value="P:cobalamin biosynthetic process"/>
    <property type="evidence" value="ECO:0007669"/>
    <property type="project" value="UniProtKB-UniRule"/>
</dbReference>
<dbReference type="GO" id="GO:0032259">
    <property type="term" value="P:methylation"/>
    <property type="evidence" value="ECO:0007669"/>
    <property type="project" value="UniProtKB-KW"/>
</dbReference>
<dbReference type="GO" id="GO:0019354">
    <property type="term" value="P:siroheme biosynthetic process"/>
    <property type="evidence" value="ECO:0007669"/>
    <property type="project" value="UniProtKB-UniRule"/>
</dbReference>
<dbReference type="CDD" id="cd11642">
    <property type="entry name" value="SUMT"/>
    <property type="match status" value="1"/>
</dbReference>
<dbReference type="FunFam" id="1.10.8.210:FF:000001">
    <property type="entry name" value="Siroheme synthase"/>
    <property type="match status" value="1"/>
</dbReference>
<dbReference type="FunFam" id="3.30.160.110:FF:000001">
    <property type="entry name" value="Siroheme synthase"/>
    <property type="match status" value="1"/>
</dbReference>
<dbReference type="FunFam" id="3.30.950.10:FF:000001">
    <property type="entry name" value="Siroheme synthase"/>
    <property type="match status" value="1"/>
</dbReference>
<dbReference type="FunFam" id="3.40.1010.10:FF:000001">
    <property type="entry name" value="Siroheme synthase"/>
    <property type="match status" value="1"/>
</dbReference>
<dbReference type="FunFam" id="3.40.50.720:FF:000092">
    <property type="entry name" value="Siroheme synthase"/>
    <property type="match status" value="1"/>
</dbReference>
<dbReference type="Gene3D" id="3.40.1010.10">
    <property type="entry name" value="Cobalt-precorrin-4 Transmethylase, Domain 1"/>
    <property type="match status" value="1"/>
</dbReference>
<dbReference type="Gene3D" id="3.30.950.10">
    <property type="entry name" value="Methyltransferase, Cobalt-precorrin-4 Transmethylase, Domain 2"/>
    <property type="match status" value="1"/>
</dbReference>
<dbReference type="Gene3D" id="3.40.50.720">
    <property type="entry name" value="NAD(P)-binding Rossmann-like Domain"/>
    <property type="match status" value="1"/>
</dbReference>
<dbReference type="Gene3D" id="1.10.8.210">
    <property type="entry name" value="Sirohaem synthase, dimerisation domain"/>
    <property type="match status" value="1"/>
</dbReference>
<dbReference type="Gene3D" id="3.30.160.110">
    <property type="entry name" value="Siroheme synthase, domain 2"/>
    <property type="match status" value="1"/>
</dbReference>
<dbReference type="HAMAP" id="MF_01646">
    <property type="entry name" value="Siroheme_synth"/>
    <property type="match status" value="1"/>
</dbReference>
<dbReference type="InterPro" id="IPR000878">
    <property type="entry name" value="4pyrrol_Mease"/>
</dbReference>
<dbReference type="InterPro" id="IPR035996">
    <property type="entry name" value="4pyrrol_Methylase_sf"/>
</dbReference>
<dbReference type="InterPro" id="IPR014777">
    <property type="entry name" value="4pyrrole_Mease_sub1"/>
</dbReference>
<dbReference type="InterPro" id="IPR014776">
    <property type="entry name" value="4pyrrole_Mease_sub2"/>
</dbReference>
<dbReference type="InterPro" id="IPR006366">
    <property type="entry name" value="CobA/CysG_C"/>
</dbReference>
<dbReference type="InterPro" id="IPR036291">
    <property type="entry name" value="NAD(P)-bd_dom_sf"/>
</dbReference>
<dbReference type="InterPro" id="IPR050161">
    <property type="entry name" value="Siro_Cobalamin_biosynth"/>
</dbReference>
<dbReference type="InterPro" id="IPR037115">
    <property type="entry name" value="Sirohaem_synt_dimer_dom_sf"/>
</dbReference>
<dbReference type="InterPro" id="IPR012409">
    <property type="entry name" value="Sirohaem_synth"/>
</dbReference>
<dbReference type="InterPro" id="IPR028281">
    <property type="entry name" value="Sirohaem_synthase_central"/>
</dbReference>
<dbReference type="InterPro" id="IPR019478">
    <property type="entry name" value="Sirohaem_synthase_dimer_dom"/>
</dbReference>
<dbReference type="InterPro" id="IPR006367">
    <property type="entry name" value="Sirohaem_synthase_N"/>
</dbReference>
<dbReference type="InterPro" id="IPR003043">
    <property type="entry name" value="Uropor_MeTrfase_CS"/>
</dbReference>
<dbReference type="NCBIfam" id="TIGR01469">
    <property type="entry name" value="cobA_cysG_Cterm"/>
    <property type="match status" value="1"/>
</dbReference>
<dbReference type="NCBIfam" id="TIGR01470">
    <property type="entry name" value="cysG_Nterm"/>
    <property type="match status" value="1"/>
</dbReference>
<dbReference type="NCBIfam" id="NF004790">
    <property type="entry name" value="PRK06136.1"/>
    <property type="match status" value="1"/>
</dbReference>
<dbReference type="NCBIfam" id="NF007922">
    <property type="entry name" value="PRK10637.1"/>
    <property type="match status" value="1"/>
</dbReference>
<dbReference type="PANTHER" id="PTHR45790:SF1">
    <property type="entry name" value="SIROHEME SYNTHASE"/>
    <property type="match status" value="1"/>
</dbReference>
<dbReference type="PANTHER" id="PTHR45790">
    <property type="entry name" value="SIROHEME SYNTHASE-RELATED"/>
    <property type="match status" value="1"/>
</dbReference>
<dbReference type="Pfam" id="PF10414">
    <property type="entry name" value="CysG_dimeriser"/>
    <property type="match status" value="1"/>
</dbReference>
<dbReference type="Pfam" id="PF13241">
    <property type="entry name" value="NAD_binding_7"/>
    <property type="match status" value="1"/>
</dbReference>
<dbReference type="Pfam" id="PF14824">
    <property type="entry name" value="Sirohm_synth_M"/>
    <property type="match status" value="1"/>
</dbReference>
<dbReference type="Pfam" id="PF00590">
    <property type="entry name" value="TP_methylase"/>
    <property type="match status" value="1"/>
</dbReference>
<dbReference type="PIRSF" id="PIRSF036426">
    <property type="entry name" value="Sirohaem_synth"/>
    <property type="match status" value="1"/>
</dbReference>
<dbReference type="SUPFAM" id="SSF51735">
    <property type="entry name" value="NAD(P)-binding Rossmann-fold domains"/>
    <property type="match status" value="1"/>
</dbReference>
<dbReference type="SUPFAM" id="SSF75615">
    <property type="entry name" value="Siroheme synthase middle domains-like"/>
    <property type="match status" value="1"/>
</dbReference>
<dbReference type="SUPFAM" id="SSF53790">
    <property type="entry name" value="Tetrapyrrole methylase"/>
    <property type="match status" value="1"/>
</dbReference>
<dbReference type="PROSITE" id="PS00839">
    <property type="entry name" value="SUMT_1"/>
    <property type="match status" value="1"/>
</dbReference>
<dbReference type="PROSITE" id="PS00840">
    <property type="entry name" value="SUMT_2"/>
    <property type="match status" value="1"/>
</dbReference>
<name>CYSG_SALCH</name>